<gene>
    <name evidence="1" type="primary">pyrB</name>
    <name type="ordered locus">Clim_1788</name>
</gene>
<protein>
    <recommendedName>
        <fullName evidence="1">Aspartate carbamoyltransferase catalytic subunit</fullName>
        <ecNumber evidence="1">2.1.3.2</ecNumber>
    </recommendedName>
    <alternativeName>
        <fullName evidence="1">Aspartate transcarbamylase</fullName>
        <shortName evidence="1">ATCase</shortName>
    </alternativeName>
</protein>
<sequence>MKNLTGLCNLPAGDIHTLLDLAAVFKKRLVTPDPSFSVTLQNKRIALVFFENSTRTRFSFDIAARHLGGSTLSFSASGSSVSKGESLGDTIRNLEAMQVDAFVLRHASSGAADFIAGITAKTVINAGDGSHEHPTQALLDIFTLREHFGAVKGLNIVILGDVLHSRVARSNIFGLKTLGANVAVCGPATLLFSDTSHLGVSIFTDLDKAIEWADAALVLRLQLERATGGYLPSLEEYSTHFGLNDERLERVRKHLLVLHPGPINREIEISNNVADRIQPPGYSKSMLLEQVSNGVAVRMAVLQTLLAG</sequence>
<evidence type="ECO:0000255" key="1">
    <source>
        <dbReference type="HAMAP-Rule" id="MF_00001"/>
    </source>
</evidence>
<dbReference type="EC" id="2.1.3.2" evidence="1"/>
<dbReference type="EMBL" id="CP001097">
    <property type="protein sequence ID" value="ACD90827.1"/>
    <property type="molecule type" value="Genomic_DNA"/>
</dbReference>
<dbReference type="RefSeq" id="WP_012466700.1">
    <property type="nucleotide sequence ID" value="NC_010803.1"/>
</dbReference>
<dbReference type="SMR" id="B3EEL7"/>
<dbReference type="STRING" id="290315.Clim_1788"/>
<dbReference type="KEGG" id="cli:Clim_1788"/>
<dbReference type="eggNOG" id="COG0540">
    <property type="taxonomic scope" value="Bacteria"/>
</dbReference>
<dbReference type="HOGENOM" id="CLU_043846_2_0_10"/>
<dbReference type="OrthoDB" id="9774690at2"/>
<dbReference type="UniPathway" id="UPA00070">
    <property type="reaction ID" value="UER00116"/>
</dbReference>
<dbReference type="Proteomes" id="UP000008841">
    <property type="component" value="Chromosome"/>
</dbReference>
<dbReference type="GO" id="GO:0005829">
    <property type="term" value="C:cytosol"/>
    <property type="evidence" value="ECO:0007669"/>
    <property type="project" value="TreeGrafter"/>
</dbReference>
<dbReference type="GO" id="GO:0016597">
    <property type="term" value="F:amino acid binding"/>
    <property type="evidence" value="ECO:0007669"/>
    <property type="project" value="InterPro"/>
</dbReference>
<dbReference type="GO" id="GO:0004070">
    <property type="term" value="F:aspartate carbamoyltransferase activity"/>
    <property type="evidence" value="ECO:0007669"/>
    <property type="project" value="UniProtKB-UniRule"/>
</dbReference>
<dbReference type="GO" id="GO:0006207">
    <property type="term" value="P:'de novo' pyrimidine nucleobase biosynthetic process"/>
    <property type="evidence" value="ECO:0007669"/>
    <property type="project" value="InterPro"/>
</dbReference>
<dbReference type="GO" id="GO:0044205">
    <property type="term" value="P:'de novo' UMP biosynthetic process"/>
    <property type="evidence" value="ECO:0007669"/>
    <property type="project" value="UniProtKB-UniRule"/>
</dbReference>
<dbReference type="GO" id="GO:0006520">
    <property type="term" value="P:amino acid metabolic process"/>
    <property type="evidence" value="ECO:0007669"/>
    <property type="project" value="InterPro"/>
</dbReference>
<dbReference type="Gene3D" id="3.40.50.1370">
    <property type="entry name" value="Aspartate/ornithine carbamoyltransferase"/>
    <property type="match status" value="2"/>
</dbReference>
<dbReference type="HAMAP" id="MF_00001">
    <property type="entry name" value="Asp_carb_tr"/>
    <property type="match status" value="1"/>
</dbReference>
<dbReference type="InterPro" id="IPR006132">
    <property type="entry name" value="Asp/Orn_carbamoyltranf_P-bd"/>
</dbReference>
<dbReference type="InterPro" id="IPR006130">
    <property type="entry name" value="Asp/Orn_carbamoylTrfase"/>
</dbReference>
<dbReference type="InterPro" id="IPR036901">
    <property type="entry name" value="Asp/Orn_carbamoylTrfase_sf"/>
</dbReference>
<dbReference type="InterPro" id="IPR002082">
    <property type="entry name" value="Asp_carbamoyltransf"/>
</dbReference>
<dbReference type="InterPro" id="IPR006131">
    <property type="entry name" value="Asp_carbamoyltransf_Asp/Orn-bd"/>
</dbReference>
<dbReference type="NCBIfam" id="TIGR00670">
    <property type="entry name" value="asp_carb_tr"/>
    <property type="match status" value="1"/>
</dbReference>
<dbReference type="NCBIfam" id="NF002032">
    <property type="entry name" value="PRK00856.1"/>
    <property type="match status" value="1"/>
</dbReference>
<dbReference type="PANTHER" id="PTHR45753:SF6">
    <property type="entry name" value="ASPARTATE CARBAMOYLTRANSFERASE"/>
    <property type="match status" value="1"/>
</dbReference>
<dbReference type="PANTHER" id="PTHR45753">
    <property type="entry name" value="ORNITHINE CARBAMOYLTRANSFERASE, MITOCHONDRIAL"/>
    <property type="match status" value="1"/>
</dbReference>
<dbReference type="Pfam" id="PF00185">
    <property type="entry name" value="OTCace"/>
    <property type="match status" value="1"/>
</dbReference>
<dbReference type="Pfam" id="PF02729">
    <property type="entry name" value="OTCace_N"/>
    <property type="match status" value="1"/>
</dbReference>
<dbReference type="PRINTS" id="PR00100">
    <property type="entry name" value="AOTCASE"/>
</dbReference>
<dbReference type="PRINTS" id="PR00101">
    <property type="entry name" value="ATCASE"/>
</dbReference>
<dbReference type="SUPFAM" id="SSF53671">
    <property type="entry name" value="Aspartate/ornithine carbamoyltransferase"/>
    <property type="match status" value="1"/>
</dbReference>
<dbReference type="PROSITE" id="PS00097">
    <property type="entry name" value="CARBAMOYLTRANSFERASE"/>
    <property type="match status" value="1"/>
</dbReference>
<accession>B3EEL7</accession>
<keyword id="KW-0665">Pyrimidine biosynthesis</keyword>
<keyword id="KW-0808">Transferase</keyword>
<reference key="1">
    <citation type="submission" date="2008-05" db="EMBL/GenBank/DDBJ databases">
        <title>Complete sequence of Chlorobium limicola DSM 245.</title>
        <authorList>
            <consortium name="US DOE Joint Genome Institute"/>
            <person name="Lucas S."/>
            <person name="Copeland A."/>
            <person name="Lapidus A."/>
            <person name="Glavina del Rio T."/>
            <person name="Dalin E."/>
            <person name="Tice H."/>
            <person name="Bruce D."/>
            <person name="Goodwin L."/>
            <person name="Pitluck S."/>
            <person name="Schmutz J."/>
            <person name="Larimer F."/>
            <person name="Land M."/>
            <person name="Hauser L."/>
            <person name="Kyrpides N."/>
            <person name="Ovchinnikova G."/>
            <person name="Zhao F."/>
            <person name="Li T."/>
            <person name="Liu Z."/>
            <person name="Overmann J."/>
            <person name="Bryant D.A."/>
            <person name="Richardson P."/>
        </authorList>
    </citation>
    <scope>NUCLEOTIDE SEQUENCE [LARGE SCALE GENOMIC DNA]</scope>
    <source>
        <strain>DSM 245 / NBRC 103803 / 6330</strain>
    </source>
</reference>
<feature type="chain" id="PRO_1000088747" description="Aspartate carbamoyltransferase catalytic subunit">
    <location>
        <begin position="1"/>
        <end position="308"/>
    </location>
</feature>
<feature type="binding site" evidence="1">
    <location>
        <position position="55"/>
    </location>
    <ligand>
        <name>carbamoyl phosphate</name>
        <dbReference type="ChEBI" id="CHEBI:58228"/>
    </ligand>
</feature>
<feature type="binding site" evidence="1">
    <location>
        <position position="56"/>
    </location>
    <ligand>
        <name>carbamoyl phosphate</name>
        <dbReference type="ChEBI" id="CHEBI:58228"/>
    </ligand>
</feature>
<feature type="binding site" evidence="1">
    <location>
        <position position="83"/>
    </location>
    <ligand>
        <name>L-aspartate</name>
        <dbReference type="ChEBI" id="CHEBI:29991"/>
    </ligand>
</feature>
<feature type="binding site" evidence="1">
    <location>
        <position position="105"/>
    </location>
    <ligand>
        <name>carbamoyl phosphate</name>
        <dbReference type="ChEBI" id="CHEBI:58228"/>
    </ligand>
</feature>
<feature type="binding site" evidence="1">
    <location>
        <position position="133"/>
    </location>
    <ligand>
        <name>carbamoyl phosphate</name>
        <dbReference type="ChEBI" id="CHEBI:58228"/>
    </ligand>
</feature>
<feature type="binding site" evidence="1">
    <location>
        <position position="136"/>
    </location>
    <ligand>
        <name>carbamoyl phosphate</name>
        <dbReference type="ChEBI" id="CHEBI:58228"/>
    </ligand>
</feature>
<feature type="binding site" evidence="1">
    <location>
        <position position="166"/>
    </location>
    <ligand>
        <name>L-aspartate</name>
        <dbReference type="ChEBI" id="CHEBI:29991"/>
    </ligand>
</feature>
<feature type="binding site" evidence="1">
    <location>
        <position position="220"/>
    </location>
    <ligand>
        <name>L-aspartate</name>
        <dbReference type="ChEBI" id="CHEBI:29991"/>
    </ligand>
</feature>
<feature type="binding site" evidence="1">
    <location>
        <position position="261"/>
    </location>
    <ligand>
        <name>carbamoyl phosphate</name>
        <dbReference type="ChEBI" id="CHEBI:58228"/>
    </ligand>
</feature>
<feature type="binding site" evidence="1">
    <location>
        <position position="262"/>
    </location>
    <ligand>
        <name>carbamoyl phosphate</name>
        <dbReference type="ChEBI" id="CHEBI:58228"/>
    </ligand>
</feature>
<proteinExistence type="inferred from homology"/>
<name>PYRB_CHLL2</name>
<comment type="function">
    <text evidence="1">Catalyzes the condensation of carbamoyl phosphate and aspartate to form carbamoyl aspartate and inorganic phosphate, the committed step in the de novo pyrimidine nucleotide biosynthesis pathway.</text>
</comment>
<comment type="catalytic activity">
    <reaction evidence="1">
        <text>carbamoyl phosphate + L-aspartate = N-carbamoyl-L-aspartate + phosphate + H(+)</text>
        <dbReference type="Rhea" id="RHEA:20013"/>
        <dbReference type="ChEBI" id="CHEBI:15378"/>
        <dbReference type="ChEBI" id="CHEBI:29991"/>
        <dbReference type="ChEBI" id="CHEBI:32814"/>
        <dbReference type="ChEBI" id="CHEBI:43474"/>
        <dbReference type="ChEBI" id="CHEBI:58228"/>
        <dbReference type="EC" id="2.1.3.2"/>
    </reaction>
</comment>
<comment type="pathway">
    <text evidence="1">Pyrimidine metabolism; UMP biosynthesis via de novo pathway; (S)-dihydroorotate from bicarbonate: step 2/3.</text>
</comment>
<comment type="subunit">
    <text evidence="1">Heterododecamer (2C3:3R2) of six catalytic PyrB chains organized as two trimers (C3), and six regulatory PyrI chains organized as three dimers (R2).</text>
</comment>
<comment type="similarity">
    <text evidence="1">Belongs to the aspartate/ornithine carbamoyltransferase superfamily. ATCase family.</text>
</comment>
<organism>
    <name type="scientific">Chlorobium limicola (strain DSM 245 / NBRC 103803 / 6330)</name>
    <dbReference type="NCBI Taxonomy" id="290315"/>
    <lineage>
        <taxon>Bacteria</taxon>
        <taxon>Pseudomonadati</taxon>
        <taxon>Chlorobiota</taxon>
        <taxon>Chlorobiia</taxon>
        <taxon>Chlorobiales</taxon>
        <taxon>Chlorobiaceae</taxon>
        <taxon>Chlorobium/Pelodictyon group</taxon>
        <taxon>Chlorobium</taxon>
    </lineage>
</organism>